<evidence type="ECO:0000305" key="1"/>
<comment type="function">
    <text>Plays a role in the inhibition of methylation at the GATC1028 site located in the regulatory region upstream of the pabA promoter. May, in conjunction with the Mbf (methylation blocking factor), inhibits deoxyadenosine methylase from methylating the GATC1028 site.</text>
</comment>
<comment type="similarity">
    <text evidence="1">To E.coli AfaF and DaaF.</text>
</comment>
<gene>
    <name type="primary">papI</name>
</gene>
<feature type="chain" id="PRO_0000058231" description="Major pilus subunit operon regulatory protein">
    <location>
        <begin position="1"/>
        <end position="77"/>
    </location>
</feature>
<name>PAPI_ECOLX</name>
<proteinExistence type="predicted"/>
<reference key="1">
    <citation type="journal article" date="1985" name="EMBO J.">
        <title>Transcriptional activation of a pap pilus virulence operon from uropathogenic Escherichia coli.</title>
        <authorList>
            <person name="Baga M."/>
            <person name="Goeransson M."/>
            <person name="Normark S."/>
            <person name="Uhlin B.E."/>
        </authorList>
    </citation>
    <scope>NUCLEOTIDE SEQUENCE [GENOMIC DNA]</scope>
    <source>
        <strain>ATCC 700336 / J96 / UPEC</strain>
    </source>
</reference>
<reference key="2">
    <citation type="journal article" date="1992" name="Mol. Microbiol.">
        <title>Horizontal gene transfer of the Escherichia coli pap and prs pili operons as a mechanism for the development of tissue-specific adhesive properties.</title>
        <authorList>
            <person name="Marklund B.-I."/>
            <person name="Tennent J.M."/>
            <person name="Garcia E."/>
            <person name="Hamers A."/>
            <person name="Baga M."/>
            <person name="Lindberg F."/>
            <person name="Gaastra W."/>
            <person name="Normark S."/>
        </authorList>
    </citation>
    <scope>NUCLEOTIDE SEQUENCE [GENOMIC DNA]</scope>
    <source>
        <strain>ATCC 700336 / J96 / UPEC</strain>
    </source>
</reference>
<protein>
    <recommendedName>
        <fullName>Major pilus subunit operon regulatory protein</fullName>
    </recommendedName>
</protein>
<accession>P04743</accession>
<sequence length="77" mass="8855">MSEYMKNEILEFLNRHNGGKTAEIAEALAVTDYQARYYLLLLEKEGMVQRSPLRRGMATYWFLKGEMQAGQNCSSTT</sequence>
<keyword id="KW-0010">Activator</keyword>
<keyword id="KW-1029">Fimbrium biogenesis</keyword>
<keyword id="KW-0804">Transcription</keyword>
<keyword id="KW-0805">Transcription regulation</keyword>
<dbReference type="EMBL" id="X03391">
    <property type="protein sequence ID" value="CAA27124.1"/>
    <property type="molecule type" value="Genomic_DNA"/>
</dbReference>
<dbReference type="EMBL" id="X61239">
    <property type="protein sequence ID" value="CAA43560.1"/>
    <property type="molecule type" value="Genomic_DNA"/>
</dbReference>
<dbReference type="PIR" id="A25121">
    <property type="entry name" value="RGECPI"/>
</dbReference>
<dbReference type="RefSeq" id="WP_000006209.1">
    <property type="nucleotide sequence ID" value="NZ_WIKQ01000028.1"/>
</dbReference>
<dbReference type="SMR" id="P04743"/>
<dbReference type="PATRIC" id="fig|562.10483.peg.2953"/>
<dbReference type="GO" id="GO:0006355">
    <property type="term" value="P:regulation of DNA-templated transcription"/>
    <property type="evidence" value="ECO:0007669"/>
    <property type="project" value="InterPro"/>
</dbReference>
<dbReference type="Gene3D" id="1.10.10.10">
    <property type="entry name" value="Winged helix-like DNA-binding domain superfamily/Winged helix DNA-binding domain"/>
    <property type="match status" value="1"/>
</dbReference>
<dbReference type="InterPro" id="IPR006793">
    <property type="entry name" value="FaeA"/>
</dbReference>
<dbReference type="InterPro" id="IPR036388">
    <property type="entry name" value="WH-like_DNA-bd_sf"/>
</dbReference>
<dbReference type="InterPro" id="IPR036390">
    <property type="entry name" value="WH_DNA-bd_sf"/>
</dbReference>
<dbReference type="Pfam" id="PF04703">
    <property type="entry name" value="FaeA"/>
    <property type="match status" value="1"/>
</dbReference>
<dbReference type="SUPFAM" id="SSF46785">
    <property type="entry name" value="Winged helix' DNA-binding domain"/>
    <property type="match status" value="1"/>
</dbReference>
<organism>
    <name type="scientific">Escherichia coli</name>
    <dbReference type="NCBI Taxonomy" id="562"/>
    <lineage>
        <taxon>Bacteria</taxon>
        <taxon>Pseudomonadati</taxon>
        <taxon>Pseudomonadota</taxon>
        <taxon>Gammaproteobacteria</taxon>
        <taxon>Enterobacterales</taxon>
        <taxon>Enterobacteriaceae</taxon>
        <taxon>Escherichia</taxon>
    </lineage>
</organism>